<evidence type="ECO:0000250" key="1">
    <source>
        <dbReference type="UniProtKB" id="P00395"/>
    </source>
</evidence>
<evidence type="ECO:0000250" key="2">
    <source>
        <dbReference type="UniProtKB" id="P00396"/>
    </source>
</evidence>
<evidence type="ECO:0000250" key="3">
    <source>
        <dbReference type="UniProtKB" id="P00401"/>
    </source>
</evidence>
<evidence type="ECO:0000305" key="4"/>
<accession>P24985</accession>
<feature type="chain" id="PRO_0000183320" description="Cytochrome c oxidase subunit 1">
    <location>
        <begin position="1"/>
        <end position="516"/>
    </location>
</feature>
<feature type="topological domain" description="Mitochondrial matrix" evidence="2">
    <location>
        <begin position="1"/>
        <end position="11"/>
    </location>
</feature>
<feature type="transmembrane region" description="Helical; Name=I" evidence="2">
    <location>
        <begin position="12"/>
        <end position="40"/>
    </location>
</feature>
<feature type="topological domain" description="Mitochondrial intermembrane" evidence="2">
    <location>
        <begin position="41"/>
        <end position="50"/>
    </location>
</feature>
<feature type="transmembrane region" description="Helical; Name=II" evidence="2">
    <location>
        <begin position="51"/>
        <end position="86"/>
    </location>
</feature>
<feature type="topological domain" description="Mitochondrial matrix" evidence="2">
    <location>
        <begin position="87"/>
        <end position="94"/>
    </location>
</feature>
<feature type="transmembrane region" description="Helical; Name=III" evidence="2">
    <location>
        <begin position="95"/>
        <end position="117"/>
    </location>
</feature>
<feature type="topological domain" description="Mitochondrial intermembrane" evidence="2">
    <location>
        <begin position="118"/>
        <end position="140"/>
    </location>
</feature>
<feature type="transmembrane region" description="Helical; Name=IV" evidence="2">
    <location>
        <begin position="141"/>
        <end position="170"/>
    </location>
</feature>
<feature type="topological domain" description="Mitochondrial matrix" evidence="2">
    <location>
        <begin position="171"/>
        <end position="182"/>
    </location>
</feature>
<feature type="transmembrane region" description="Helical; Name=V" evidence="2">
    <location>
        <begin position="183"/>
        <end position="212"/>
    </location>
</feature>
<feature type="topological domain" description="Mitochondrial intermembrane" evidence="2">
    <location>
        <begin position="213"/>
        <end position="227"/>
    </location>
</feature>
<feature type="transmembrane region" description="Helical; Name=VI" evidence="2">
    <location>
        <begin position="228"/>
        <end position="261"/>
    </location>
</feature>
<feature type="topological domain" description="Mitochondrial matrix" evidence="2">
    <location>
        <begin position="262"/>
        <end position="269"/>
    </location>
</feature>
<feature type="transmembrane region" description="Helical; Name=VII" evidence="2">
    <location>
        <begin position="270"/>
        <end position="286"/>
    </location>
</feature>
<feature type="topological domain" description="Mitochondrial intermembrane" evidence="2">
    <location>
        <begin position="287"/>
        <end position="298"/>
    </location>
</feature>
<feature type="transmembrane region" description="Helical; Name=VIII" evidence="2">
    <location>
        <begin position="299"/>
        <end position="327"/>
    </location>
</feature>
<feature type="topological domain" description="Mitochondrial matrix" evidence="2">
    <location>
        <begin position="328"/>
        <end position="335"/>
    </location>
</feature>
<feature type="transmembrane region" description="Helical; Name=IX" evidence="2">
    <location>
        <begin position="336"/>
        <end position="357"/>
    </location>
</feature>
<feature type="topological domain" description="Mitochondrial intermembrane" evidence="2">
    <location>
        <begin position="358"/>
        <end position="370"/>
    </location>
</feature>
<feature type="transmembrane region" description="Helical; Name=X" evidence="2">
    <location>
        <begin position="371"/>
        <end position="400"/>
    </location>
</feature>
<feature type="topological domain" description="Mitochondrial matrix" evidence="2">
    <location>
        <begin position="401"/>
        <end position="406"/>
    </location>
</feature>
<feature type="transmembrane region" description="Helical; Name=XI" evidence="2">
    <location>
        <begin position="407"/>
        <end position="433"/>
    </location>
</feature>
<feature type="topological domain" description="Mitochondrial intermembrane" evidence="2">
    <location>
        <begin position="434"/>
        <end position="446"/>
    </location>
</feature>
<feature type="transmembrane region" description="Helical; Name=XII" evidence="2">
    <location>
        <begin position="447"/>
        <end position="478"/>
    </location>
</feature>
<feature type="topological domain" description="Mitochondrial matrix" evidence="2">
    <location>
        <begin position="479"/>
        <end position="516"/>
    </location>
</feature>
<feature type="binding site" evidence="2">
    <location>
        <position position="40"/>
    </location>
    <ligand>
        <name>Na(+)</name>
        <dbReference type="ChEBI" id="CHEBI:29101"/>
    </ligand>
</feature>
<feature type="binding site" evidence="2">
    <location>
        <position position="45"/>
    </location>
    <ligand>
        <name>Na(+)</name>
        <dbReference type="ChEBI" id="CHEBI:29101"/>
    </ligand>
</feature>
<feature type="binding site" description="axial binding residue" evidence="2">
    <location>
        <position position="61"/>
    </location>
    <ligand>
        <name>Fe(II)-heme a</name>
        <dbReference type="ChEBI" id="CHEBI:61715"/>
        <note>low-spin</note>
    </ligand>
    <ligandPart>
        <name>Fe</name>
        <dbReference type="ChEBI" id="CHEBI:18248"/>
    </ligandPart>
</feature>
<feature type="binding site" evidence="2">
    <location>
        <position position="240"/>
    </location>
    <ligand>
        <name>Cu cation</name>
        <dbReference type="ChEBI" id="CHEBI:23378"/>
        <label>B</label>
    </ligand>
</feature>
<feature type="binding site" evidence="2">
    <location>
        <position position="244"/>
    </location>
    <ligand>
        <name>O2</name>
        <dbReference type="ChEBI" id="CHEBI:15379"/>
    </ligand>
</feature>
<feature type="binding site" evidence="2">
    <location>
        <position position="290"/>
    </location>
    <ligand>
        <name>Cu cation</name>
        <dbReference type="ChEBI" id="CHEBI:23378"/>
        <label>B</label>
    </ligand>
</feature>
<feature type="binding site" evidence="2">
    <location>
        <position position="291"/>
    </location>
    <ligand>
        <name>Cu cation</name>
        <dbReference type="ChEBI" id="CHEBI:23378"/>
        <label>B</label>
    </ligand>
</feature>
<feature type="binding site" evidence="2">
    <location>
        <position position="368"/>
    </location>
    <ligand>
        <name>Mg(2+)</name>
        <dbReference type="ChEBI" id="CHEBI:18420"/>
        <note>ligand shared with MT-CO2</note>
    </ligand>
</feature>
<feature type="binding site" evidence="2">
    <location>
        <position position="369"/>
    </location>
    <ligand>
        <name>Mg(2+)</name>
        <dbReference type="ChEBI" id="CHEBI:18420"/>
        <note>ligand shared with MT-CO2</note>
    </ligand>
</feature>
<feature type="binding site" description="axial binding residue" evidence="2">
    <location>
        <position position="376"/>
    </location>
    <ligand>
        <name>heme a3</name>
        <dbReference type="ChEBI" id="CHEBI:83282"/>
        <note>high-spin</note>
    </ligand>
    <ligandPart>
        <name>Fe</name>
        <dbReference type="ChEBI" id="CHEBI:18248"/>
    </ligandPart>
</feature>
<feature type="binding site" description="axial binding residue" evidence="2">
    <location>
        <position position="378"/>
    </location>
    <ligand>
        <name>Fe(II)-heme a</name>
        <dbReference type="ChEBI" id="CHEBI:61715"/>
        <note>low-spin</note>
    </ligand>
    <ligandPart>
        <name>Fe</name>
        <dbReference type="ChEBI" id="CHEBI:18248"/>
    </ligandPart>
</feature>
<feature type="binding site" evidence="2">
    <location>
        <position position="441"/>
    </location>
    <ligand>
        <name>Na(+)</name>
        <dbReference type="ChEBI" id="CHEBI:29101"/>
    </ligand>
</feature>
<feature type="cross-link" description="1'-histidyl-3'-tyrosine (His-Tyr)" evidence="2">
    <location>
        <begin position="240"/>
        <end position="244"/>
    </location>
</feature>
<name>COX1_CYPCA</name>
<sequence length="516" mass="56863">MAITRWFFSTNHKDIGTLYLVFGAWAGMVGTALSLLIRAELSQPGSLLSDDQIYNVIVTAHAFVMIFFMVMPILIGGFGNWLVPLMIGAPDMAFPRMNNMSFWLLPPSFLLLLASSGVEAGAGTGWSVYPPLAGNLAHAGASVDLTIFSLHLAGVSSILGAINFITTTINMKPPAISQYQTPLFVWSVLVTAVLLLLSLPVLAAGITMLLTDRNLNTTFFDPAGGGDPILYQHLFWFFGHPEVYILILPGFGIISHVVAYYSGKKEPFGYMGMVWAMMAIGLLGFIVWAHHMFTVGMDVDTRAYFTSATMIIAIPTGVKVFSWLATLHGGSIKWETPMLWALGFIFLFTVGGLTGIVLSNSSLDIVLHDTYYVVAHFHYVLSMGAVFAIMAAFVHWFPLLTGYTLHSTWTKIHFGVMFIGVNLTFFPQHFLGLSAMPRRYSDYPDAYALWNTVSSIGSLISLVAVIMFLFILWEAFAAKREVLSVELTATNVEWLHGCPPPYHTYEEPAFVQIQSN</sequence>
<protein>
    <recommendedName>
        <fullName>Cytochrome c oxidase subunit 1</fullName>
        <ecNumber>7.1.1.9</ecNumber>
    </recommendedName>
    <alternativeName>
        <fullName>Cytochrome c oxidase polypeptide I</fullName>
    </alternativeName>
</protein>
<comment type="function">
    <text evidence="3">Component of the cytochrome c oxidase, the last enzyme in the mitochondrial electron transport chain which drives oxidative phosphorylation. The respiratory chain contains 3 multisubunit complexes succinate dehydrogenase (complex II, CII), ubiquinol-cytochrome c oxidoreductase (cytochrome b-c1 complex, complex III, CIII) and cytochrome c oxidase (complex IV, CIV), that cooperate to transfer electrons derived from NADH and succinate to molecular oxygen, creating an electrochemical gradient over the inner membrane that drives transmembrane transport and the ATP synthase. Cytochrome c oxidase is the component of the respiratory chain that catalyzes the reduction of oxygen to water. Electrons originating from reduced cytochrome c in the intermembrane space (IMS) are transferred via the dinuclear copper A center (CU(A)) of subunit 2 and heme A of subunit 1 to the active site in subunit 1, a binuclear center (BNC) formed by heme A3 and copper B (CU(B)). The BNC reduces molecular oxygen to 2 water molecules using 4 electrons from cytochrome c in the IMS and 4 protons from the mitochondrial matrix.</text>
</comment>
<comment type="catalytic activity">
    <reaction evidence="3">
        <text>4 Fe(II)-[cytochrome c] + O2 + 8 H(+)(in) = 4 Fe(III)-[cytochrome c] + 2 H2O + 4 H(+)(out)</text>
        <dbReference type="Rhea" id="RHEA:11436"/>
        <dbReference type="Rhea" id="RHEA-COMP:10350"/>
        <dbReference type="Rhea" id="RHEA-COMP:14399"/>
        <dbReference type="ChEBI" id="CHEBI:15377"/>
        <dbReference type="ChEBI" id="CHEBI:15378"/>
        <dbReference type="ChEBI" id="CHEBI:15379"/>
        <dbReference type="ChEBI" id="CHEBI:29033"/>
        <dbReference type="ChEBI" id="CHEBI:29034"/>
        <dbReference type="EC" id="7.1.1.9"/>
    </reaction>
    <physiologicalReaction direction="left-to-right" evidence="3">
        <dbReference type="Rhea" id="RHEA:11437"/>
    </physiologicalReaction>
</comment>
<comment type="cofactor">
    <cofactor evidence="2">
        <name>heme</name>
        <dbReference type="ChEBI" id="CHEBI:30413"/>
    </cofactor>
    <text evidence="2">Binds 2 heme A groups non-covalently per subunit.</text>
</comment>
<comment type="cofactor">
    <cofactor evidence="2">
        <name>Cu cation</name>
        <dbReference type="ChEBI" id="CHEBI:23378"/>
    </cofactor>
    <text evidence="2">Binds a copper B center.</text>
</comment>
<comment type="pathway">
    <text evidence="3">Energy metabolism; oxidative phosphorylation.</text>
</comment>
<comment type="subunit">
    <text evidence="1 2">Component of the cytochrome c oxidase (complex IV, CIV), a multisubunit enzyme composed of 14 subunits. The complex is composed of a catalytic core of 3 subunits MT-CO1, MT-CO2 and MT-CO3, encoded in the mitochondrial DNA, and 11 supernumerary subunits COX4I, COX5A, COX5B, COX6A, COX6B, COX6C, COX7A, COX7B, COX7C, COX8 and NDUFA4, which are encoded in the nuclear genome. The complex exists as a monomer or a dimer and forms supercomplexes (SCs) in the inner mitochondrial membrane with NADH-ubiquinone oxidoreductase (complex I, CI) and ubiquinol-cytochrome c oxidoreductase (cytochrome b-c1 complex, complex III, CIII), resulting in different assemblies (supercomplex SCI(1)III(2)IV(1) and megacomplex MCI(2)III(2)IV(2)) (By similarity). As a newly synthesized protein, rapidly incorporates into a multi-subunit assembly intermediate in the inner membrane, called MITRAC (mitochondrial translation regulation assembly intermediate of cytochrome c oxidase) complex, whose core components are COA3/MITRAC12 and COX14. Within the MITRAC complex, interacts with COA3 and with SMIM20/MITRAC7; the interaction with SMIM20 stabilizes the newly synthesized MT-CO1 and prevents its premature turnover. Interacts with TMEM177 in a COX20-dependent manner (By similarity).</text>
</comment>
<comment type="subcellular location">
    <subcellularLocation>
        <location evidence="2">Mitochondrion inner membrane</location>
        <topology evidence="2">Multi-pass membrane protein</topology>
    </subcellularLocation>
</comment>
<comment type="similarity">
    <text evidence="4">Belongs to the heme-copper respiratory oxidase family.</text>
</comment>
<organism>
    <name type="scientific">Cyprinus carpio</name>
    <name type="common">Common carp</name>
    <dbReference type="NCBI Taxonomy" id="7962"/>
    <lineage>
        <taxon>Eukaryota</taxon>
        <taxon>Metazoa</taxon>
        <taxon>Chordata</taxon>
        <taxon>Craniata</taxon>
        <taxon>Vertebrata</taxon>
        <taxon>Euteleostomi</taxon>
        <taxon>Actinopterygii</taxon>
        <taxon>Neopterygii</taxon>
        <taxon>Teleostei</taxon>
        <taxon>Ostariophysi</taxon>
        <taxon>Cypriniformes</taxon>
        <taxon>Cyprinidae</taxon>
        <taxon>Cyprininae</taxon>
        <taxon>Cyprinus</taxon>
    </lineage>
</organism>
<reference key="1">
    <citation type="journal article" date="1994" name="J. Mol. Evol.">
        <title>The complete nucleotide sequence and gene organization of carp (Cyprinus carpio) mitochondrial genome.</title>
        <authorList>
            <person name="Chang Y.S."/>
            <person name="Huang F.L."/>
            <person name="Lo T.B."/>
        </authorList>
    </citation>
    <scope>NUCLEOTIDE SEQUENCE [GENOMIC DNA]</scope>
</reference>
<geneLocation type="mitochondrion"/>
<proteinExistence type="inferred from homology"/>
<keyword id="KW-0106">Calcium</keyword>
<keyword id="KW-0186">Copper</keyword>
<keyword id="KW-0249">Electron transport</keyword>
<keyword id="KW-0349">Heme</keyword>
<keyword id="KW-0408">Iron</keyword>
<keyword id="KW-0460">Magnesium</keyword>
<keyword id="KW-0472">Membrane</keyword>
<keyword id="KW-0479">Metal-binding</keyword>
<keyword id="KW-0496">Mitochondrion</keyword>
<keyword id="KW-0999">Mitochondrion inner membrane</keyword>
<keyword id="KW-1185">Reference proteome</keyword>
<keyword id="KW-0679">Respiratory chain</keyword>
<keyword id="KW-0915">Sodium</keyword>
<keyword id="KW-1278">Translocase</keyword>
<keyword id="KW-0812">Transmembrane</keyword>
<keyword id="KW-1133">Transmembrane helix</keyword>
<keyword id="KW-0813">Transport</keyword>
<dbReference type="EC" id="7.1.1.9"/>
<dbReference type="EMBL" id="X61010">
    <property type="protein sequence ID" value="CAA43339.1"/>
    <property type="molecule type" value="Genomic_DNA"/>
</dbReference>
<dbReference type="PIR" id="S36008">
    <property type="entry name" value="S36008"/>
</dbReference>
<dbReference type="RefSeq" id="NP_007084.1">
    <property type="nucleotide sequence ID" value="NC_001606.1"/>
</dbReference>
<dbReference type="SMR" id="P24985"/>
<dbReference type="GeneID" id="807765"/>
<dbReference type="KEGG" id="ccar:807765"/>
<dbReference type="CTD" id="4512"/>
<dbReference type="OMA" id="WAMMSIG"/>
<dbReference type="OrthoDB" id="10002679at2759"/>
<dbReference type="UniPathway" id="UPA00705"/>
<dbReference type="Proteomes" id="UP000694384">
    <property type="component" value="Unplaced"/>
</dbReference>
<dbReference type="Proteomes" id="UP000694427">
    <property type="component" value="Unplaced"/>
</dbReference>
<dbReference type="Proteomes" id="UP000694700">
    <property type="component" value="Unplaced"/>
</dbReference>
<dbReference type="Proteomes" id="UP000694701">
    <property type="component" value="Unplaced"/>
</dbReference>
<dbReference type="Proteomes" id="UP001155660">
    <property type="component" value="Mitochondrion MT"/>
</dbReference>
<dbReference type="GO" id="GO:0005743">
    <property type="term" value="C:mitochondrial inner membrane"/>
    <property type="evidence" value="ECO:0007669"/>
    <property type="project" value="UniProtKB-SubCell"/>
</dbReference>
<dbReference type="GO" id="GO:0045277">
    <property type="term" value="C:respiratory chain complex IV"/>
    <property type="evidence" value="ECO:0000250"/>
    <property type="project" value="UniProtKB"/>
</dbReference>
<dbReference type="GO" id="GO:0004129">
    <property type="term" value="F:cytochrome-c oxidase activity"/>
    <property type="evidence" value="ECO:0007669"/>
    <property type="project" value="UniProtKB-EC"/>
</dbReference>
<dbReference type="GO" id="GO:0020037">
    <property type="term" value="F:heme binding"/>
    <property type="evidence" value="ECO:0007669"/>
    <property type="project" value="InterPro"/>
</dbReference>
<dbReference type="GO" id="GO:0046872">
    <property type="term" value="F:metal ion binding"/>
    <property type="evidence" value="ECO:0007669"/>
    <property type="project" value="UniProtKB-KW"/>
</dbReference>
<dbReference type="GO" id="GO:0015990">
    <property type="term" value="P:electron transport coupled proton transport"/>
    <property type="evidence" value="ECO:0007669"/>
    <property type="project" value="TreeGrafter"/>
</dbReference>
<dbReference type="GO" id="GO:0006123">
    <property type="term" value="P:mitochondrial electron transport, cytochrome c to oxygen"/>
    <property type="evidence" value="ECO:0007669"/>
    <property type="project" value="TreeGrafter"/>
</dbReference>
<dbReference type="CDD" id="cd01663">
    <property type="entry name" value="Cyt_c_Oxidase_I"/>
    <property type="match status" value="1"/>
</dbReference>
<dbReference type="FunFam" id="1.20.210.10:FF:000001">
    <property type="entry name" value="Cytochrome c oxidase subunit 1"/>
    <property type="match status" value="1"/>
</dbReference>
<dbReference type="Gene3D" id="1.20.210.10">
    <property type="entry name" value="Cytochrome c oxidase-like, subunit I domain"/>
    <property type="match status" value="1"/>
</dbReference>
<dbReference type="InterPro" id="IPR023616">
    <property type="entry name" value="Cyt_c_oxase-like_su1_dom"/>
</dbReference>
<dbReference type="InterPro" id="IPR036927">
    <property type="entry name" value="Cyt_c_oxase-like_su1_sf"/>
</dbReference>
<dbReference type="InterPro" id="IPR000883">
    <property type="entry name" value="Cyt_C_Oxase_1"/>
</dbReference>
<dbReference type="InterPro" id="IPR023615">
    <property type="entry name" value="Cyt_c_Oxase_su1_BS"/>
</dbReference>
<dbReference type="InterPro" id="IPR033944">
    <property type="entry name" value="Cyt_c_oxase_su1_dom"/>
</dbReference>
<dbReference type="PANTHER" id="PTHR10422">
    <property type="entry name" value="CYTOCHROME C OXIDASE SUBUNIT 1"/>
    <property type="match status" value="1"/>
</dbReference>
<dbReference type="PANTHER" id="PTHR10422:SF18">
    <property type="entry name" value="CYTOCHROME C OXIDASE SUBUNIT 1"/>
    <property type="match status" value="1"/>
</dbReference>
<dbReference type="Pfam" id="PF00115">
    <property type="entry name" value="COX1"/>
    <property type="match status" value="1"/>
</dbReference>
<dbReference type="PRINTS" id="PR01165">
    <property type="entry name" value="CYCOXIDASEI"/>
</dbReference>
<dbReference type="SUPFAM" id="SSF81442">
    <property type="entry name" value="Cytochrome c oxidase subunit I-like"/>
    <property type="match status" value="1"/>
</dbReference>
<dbReference type="PROSITE" id="PS50855">
    <property type="entry name" value="COX1"/>
    <property type="match status" value="1"/>
</dbReference>
<dbReference type="PROSITE" id="PS00077">
    <property type="entry name" value="COX1_CUB"/>
    <property type="match status" value="1"/>
</dbReference>
<gene>
    <name type="primary">mt-co1</name>
    <name type="synonym">coi</name>
    <name type="synonym">coxi</name>
    <name type="synonym">mtco1</name>
</gene>